<organism>
    <name type="scientific">Escherichia coli O1:K1 / APEC</name>
    <dbReference type="NCBI Taxonomy" id="405955"/>
    <lineage>
        <taxon>Bacteria</taxon>
        <taxon>Pseudomonadati</taxon>
        <taxon>Pseudomonadota</taxon>
        <taxon>Gammaproteobacteria</taxon>
        <taxon>Enterobacterales</taxon>
        <taxon>Enterobacteriaceae</taxon>
        <taxon>Escherichia</taxon>
    </lineage>
</organism>
<evidence type="ECO:0000255" key="1">
    <source>
        <dbReference type="HAMAP-Rule" id="MF_00030"/>
    </source>
</evidence>
<evidence type="ECO:0000255" key="2">
    <source>
        <dbReference type="PROSITE-ProRule" id="PRU01175"/>
    </source>
</evidence>
<reference key="1">
    <citation type="journal article" date="2007" name="J. Bacteriol.">
        <title>The genome sequence of avian pathogenic Escherichia coli strain O1:K1:H7 shares strong similarities with human extraintestinal pathogenic E. coli genomes.</title>
        <authorList>
            <person name="Johnson T.J."/>
            <person name="Kariyawasam S."/>
            <person name="Wannemuehler Y."/>
            <person name="Mangiamele P."/>
            <person name="Johnson S.J."/>
            <person name="Doetkott C."/>
            <person name="Skyberg J.A."/>
            <person name="Lynne A.M."/>
            <person name="Johnson J.R."/>
            <person name="Nolan L.K."/>
        </authorList>
    </citation>
    <scope>NUCLEOTIDE SEQUENCE [LARGE SCALE GENOMIC DNA]</scope>
</reference>
<sequence length="505" mass="59374">MAQIDFRKKINWHRRYRSPQGVKTEHEILRIFESDRGRIINSPAIRRLQQKTQVFPLERNAAVRTRLTHSMEVQQVGRYIAKEILSRLKELKLLEAYGLDELTGPFESIVEMSCLMHDIGNPPFGHFGEAAINDWFRQRLYPEDAESQPLTDDRCSVAALRLRDGEEPLNALRRKIRQDLCHFEGNAQGIRLVHTLMRMNLTWAQVGGILKYTRPAWWRGETPETHHYLMKKPGYYLSEEAYIARLRKELNLALYSRFPLTWIMEAADDISYCVADLEDAVEKRIFTVEQLYHHLHEAWGQHEKGSLFSLVVENAWEKSRSNSLSRSTEDQFFMYLRVNTLNKLVPYAAQRFIDNLPAIFAGTFNHALLEDASECSDLLKLYKNVAVKHVFSHPDVEQLELQGYRVISGLLEIYRPLLNLPLSDFTELVEKERVKRFPIETRLFHKLSTRHRLAYVEAVSKLPSDSPEFPLWEYYYRCRLLQDYISGMTDLYAWDEYRRLMAVEQ</sequence>
<dbReference type="EC" id="3.1.5.1" evidence="1"/>
<dbReference type="EMBL" id="CP000468">
    <property type="protein sequence ID" value="ABI99645.1"/>
    <property type="molecule type" value="Genomic_DNA"/>
</dbReference>
<dbReference type="RefSeq" id="WP_000057086.1">
    <property type="nucleotide sequence ID" value="NZ_CADILS010000027.1"/>
</dbReference>
<dbReference type="SMR" id="A1A7K6"/>
<dbReference type="KEGG" id="ecv:APECO1_1825"/>
<dbReference type="HOGENOM" id="CLU_028163_2_1_6"/>
<dbReference type="Proteomes" id="UP000008216">
    <property type="component" value="Chromosome"/>
</dbReference>
<dbReference type="GO" id="GO:0008832">
    <property type="term" value="F:dGTPase activity"/>
    <property type="evidence" value="ECO:0007669"/>
    <property type="project" value="UniProtKB-UniRule"/>
</dbReference>
<dbReference type="GO" id="GO:0000287">
    <property type="term" value="F:magnesium ion binding"/>
    <property type="evidence" value="ECO:0007669"/>
    <property type="project" value="UniProtKB-UniRule"/>
</dbReference>
<dbReference type="GO" id="GO:0006203">
    <property type="term" value="P:dGTP catabolic process"/>
    <property type="evidence" value="ECO:0007669"/>
    <property type="project" value="InterPro"/>
</dbReference>
<dbReference type="CDD" id="cd00077">
    <property type="entry name" value="HDc"/>
    <property type="match status" value="1"/>
</dbReference>
<dbReference type="FunFam" id="1.10.3210.10:FF:000009">
    <property type="entry name" value="Deoxyguanosinetriphosphate triphosphohydrolase"/>
    <property type="match status" value="1"/>
</dbReference>
<dbReference type="FunFam" id="1.10.3210.10:FF:000010">
    <property type="entry name" value="Deoxyguanosinetriphosphate triphosphohydrolase"/>
    <property type="match status" value="1"/>
</dbReference>
<dbReference type="FunFam" id="1.10.3410.10:FF:000001">
    <property type="entry name" value="Deoxyguanosinetriphosphate triphosphohydrolase"/>
    <property type="match status" value="1"/>
</dbReference>
<dbReference type="Gene3D" id="1.10.3210.10">
    <property type="entry name" value="Hypothetical protein af1432"/>
    <property type="match status" value="2"/>
</dbReference>
<dbReference type="Gene3D" id="1.10.3410.10">
    <property type="entry name" value="putative deoxyguanosinetriphosphate triphosphohydrolase like domain"/>
    <property type="match status" value="1"/>
</dbReference>
<dbReference type="HAMAP" id="MF_00030">
    <property type="entry name" value="dGTPase_type1"/>
    <property type="match status" value="1"/>
</dbReference>
<dbReference type="InterPro" id="IPR023293">
    <property type="entry name" value="dGTP_triP_hydro_central_sf"/>
</dbReference>
<dbReference type="InterPro" id="IPR006261">
    <property type="entry name" value="dGTPase"/>
</dbReference>
<dbReference type="InterPro" id="IPR050135">
    <property type="entry name" value="dGTPase-like"/>
</dbReference>
<dbReference type="InterPro" id="IPR020779">
    <property type="entry name" value="dNTPase_1"/>
</dbReference>
<dbReference type="InterPro" id="IPR003607">
    <property type="entry name" value="HD/PDEase_dom"/>
</dbReference>
<dbReference type="InterPro" id="IPR006674">
    <property type="entry name" value="HD_domain"/>
</dbReference>
<dbReference type="NCBIfam" id="TIGR01353">
    <property type="entry name" value="dGTP_triPase"/>
    <property type="match status" value="1"/>
</dbReference>
<dbReference type="NCBIfam" id="NF003429">
    <property type="entry name" value="PRK04926.1"/>
    <property type="match status" value="1"/>
</dbReference>
<dbReference type="PANTHER" id="PTHR11373:SF32">
    <property type="entry name" value="DEOXYGUANOSINETRIPHOSPHATE TRIPHOSPHOHYDROLASE"/>
    <property type="match status" value="1"/>
</dbReference>
<dbReference type="PANTHER" id="PTHR11373">
    <property type="entry name" value="DEOXYNUCLEOSIDE TRIPHOSPHATE TRIPHOSPHOHYDROLASE"/>
    <property type="match status" value="1"/>
</dbReference>
<dbReference type="Pfam" id="PF01966">
    <property type="entry name" value="HD"/>
    <property type="match status" value="1"/>
</dbReference>
<dbReference type="SMART" id="SM00471">
    <property type="entry name" value="HDc"/>
    <property type="match status" value="1"/>
</dbReference>
<dbReference type="SUPFAM" id="SSF109604">
    <property type="entry name" value="HD-domain/PDEase-like"/>
    <property type="match status" value="1"/>
</dbReference>
<dbReference type="PROSITE" id="PS51831">
    <property type="entry name" value="HD"/>
    <property type="match status" value="1"/>
</dbReference>
<name>DGTP_ECOK1</name>
<feature type="chain" id="PRO_1000006546" description="Deoxyguanosinetriphosphate triphosphohydrolase">
    <location>
        <begin position="1"/>
        <end position="505"/>
    </location>
</feature>
<feature type="domain" description="HD" evidence="2">
    <location>
        <begin position="66"/>
        <end position="273"/>
    </location>
</feature>
<comment type="function">
    <text evidence="1">dGTPase preferentially hydrolyzes dGTP over the other canonical NTPs.</text>
</comment>
<comment type="catalytic activity">
    <reaction evidence="1">
        <text>dGTP + H2O = 2'-deoxyguanosine + triphosphate + H(+)</text>
        <dbReference type="Rhea" id="RHEA:15193"/>
        <dbReference type="ChEBI" id="CHEBI:15377"/>
        <dbReference type="ChEBI" id="CHEBI:15378"/>
        <dbReference type="ChEBI" id="CHEBI:17172"/>
        <dbReference type="ChEBI" id="CHEBI:18036"/>
        <dbReference type="ChEBI" id="CHEBI:61429"/>
        <dbReference type="EC" id="3.1.5.1"/>
    </reaction>
</comment>
<comment type="cofactor">
    <cofactor evidence="1">
        <name>Mg(2+)</name>
        <dbReference type="ChEBI" id="CHEBI:18420"/>
    </cofactor>
</comment>
<comment type="subunit">
    <text evidence="1">Homotetramer.</text>
</comment>
<comment type="similarity">
    <text evidence="1">Belongs to the dGTPase family. Type 1 subfamily.</text>
</comment>
<protein>
    <recommendedName>
        <fullName evidence="1">Deoxyguanosinetriphosphate triphosphohydrolase</fullName>
        <shortName evidence="1">dGTP triphosphohydrolase</shortName>
        <shortName evidence="1">dGTPase</shortName>
        <ecNumber evidence="1">3.1.5.1</ecNumber>
    </recommendedName>
</protein>
<keyword id="KW-0378">Hydrolase</keyword>
<keyword id="KW-0460">Magnesium</keyword>
<keyword id="KW-1185">Reference proteome</keyword>
<accession>A1A7K6</accession>
<proteinExistence type="inferred from homology"/>
<gene>
    <name evidence="1" type="primary">dgt</name>
    <name type="ordered locus">Ecok1_01520</name>
    <name type="ORF">APECO1_1825</name>
</gene>